<keyword id="KW-0963">Cytoplasm</keyword>
<keyword id="KW-0456">Lyase</keyword>
<keyword id="KW-0704">Schiff base</keyword>
<protein>
    <recommendedName>
        <fullName evidence="1">Deoxyribose-phosphate aldolase</fullName>
        <shortName evidence="1">DERA</shortName>
        <ecNumber evidence="1">4.1.2.4</ecNumber>
    </recommendedName>
    <alternativeName>
        <fullName evidence="1">2-deoxy-D-ribose 5-phosphate aldolase</fullName>
    </alternativeName>
    <alternativeName>
        <fullName evidence="1">Phosphodeoxyriboaldolase</fullName>
        <shortName evidence="1">Deoxyriboaldolase</shortName>
    </alternativeName>
</protein>
<gene>
    <name evidence="1" type="primary">deoC</name>
    <name type="ordered locus">BCAH187_A2002</name>
</gene>
<dbReference type="EC" id="4.1.2.4" evidence="1"/>
<dbReference type="EMBL" id="CP001177">
    <property type="protein sequence ID" value="ACJ77898.1"/>
    <property type="molecule type" value="Genomic_DNA"/>
</dbReference>
<dbReference type="SMR" id="B7HMQ9"/>
<dbReference type="KEGG" id="bcr:BCAH187_A2002"/>
<dbReference type="HOGENOM" id="CLU_053595_0_1_9"/>
<dbReference type="UniPathway" id="UPA00002">
    <property type="reaction ID" value="UER00468"/>
</dbReference>
<dbReference type="Proteomes" id="UP000002214">
    <property type="component" value="Chromosome"/>
</dbReference>
<dbReference type="GO" id="GO:0005737">
    <property type="term" value="C:cytoplasm"/>
    <property type="evidence" value="ECO:0007669"/>
    <property type="project" value="UniProtKB-SubCell"/>
</dbReference>
<dbReference type="GO" id="GO:0004139">
    <property type="term" value="F:deoxyribose-phosphate aldolase activity"/>
    <property type="evidence" value="ECO:0007669"/>
    <property type="project" value="UniProtKB-UniRule"/>
</dbReference>
<dbReference type="GO" id="GO:0006018">
    <property type="term" value="P:2-deoxyribose 1-phosphate catabolic process"/>
    <property type="evidence" value="ECO:0007669"/>
    <property type="project" value="UniProtKB-UniRule"/>
</dbReference>
<dbReference type="GO" id="GO:0016052">
    <property type="term" value="P:carbohydrate catabolic process"/>
    <property type="evidence" value="ECO:0007669"/>
    <property type="project" value="TreeGrafter"/>
</dbReference>
<dbReference type="GO" id="GO:0009264">
    <property type="term" value="P:deoxyribonucleotide catabolic process"/>
    <property type="evidence" value="ECO:0007669"/>
    <property type="project" value="InterPro"/>
</dbReference>
<dbReference type="CDD" id="cd00959">
    <property type="entry name" value="DeoC"/>
    <property type="match status" value="1"/>
</dbReference>
<dbReference type="FunFam" id="3.20.20.70:FF:000044">
    <property type="entry name" value="Deoxyribose-phosphate aldolase"/>
    <property type="match status" value="1"/>
</dbReference>
<dbReference type="Gene3D" id="3.20.20.70">
    <property type="entry name" value="Aldolase class I"/>
    <property type="match status" value="1"/>
</dbReference>
<dbReference type="HAMAP" id="MF_00114">
    <property type="entry name" value="DeoC_type1"/>
    <property type="match status" value="1"/>
</dbReference>
<dbReference type="InterPro" id="IPR013785">
    <property type="entry name" value="Aldolase_TIM"/>
</dbReference>
<dbReference type="InterPro" id="IPR011343">
    <property type="entry name" value="DeoC"/>
</dbReference>
<dbReference type="InterPro" id="IPR002915">
    <property type="entry name" value="DeoC/FbaB/LacD_aldolase"/>
</dbReference>
<dbReference type="InterPro" id="IPR028581">
    <property type="entry name" value="DeoC_typeI"/>
</dbReference>
<dbReference type="NCBIfam" id="TIGR00126">
    <property type="entry name" value="deoC"/>
    <property type="match status" value="1"/>
</dbReference>
<dbReference type="PANTHER" id="PTHR10889">
    <property type="entry name" value="DEOXYRIBOSE-PHOSPHATE ALDOLASE"/>
    <property type="match status" value="1"/>
</dbReference>
<dbReference type="PANTHER" id="PTHR10889:SF1">
    <property type="entry name" value="DEOXYRIBOSE-PHOSPHATE ALDOLASE"/>
    <property type="match status" value="1"/>
</dbReference>
<dbReference type="Pfam" id="PF01791">
    <property type="entry name" value="DeoC"/>
    <property type="match status" value="1"/>
</dbReference>
<dbReference type="PIRSF" id="PIRSF001357">
    <property type="entry name" value="DeoC"/>
    <property type="match status" value="1"/>
</dbReference>
<dbReference type="SMART" id="SM01133">
    <property type="entry name" value="DeoC"/>
    <property type="match status" value="1"/>
</dbReference>
<dbReference type="SUPFAM" id="SSF51569">
    <property type="entry name" value="Aldolase"/>
    <property type="match status" value="1"/>
</dbReference>
<name>DEOC_BACC7</name>
<proteinExistence type="inferred from homology"/>
<comment type="function">
    <text evidence="1">Catalyzes a reversible aldol reaction between acetaldehyde and D-glyceraldehyde 3-phosphate to generate 2-deoxy-D-ribose 5-phosphate.</text>
</comment>
<comment type="catalytic activity">
    <reaction evidence="1">
        <text>2-deoxy-D-ribose 5-phosphate = D-glyceraldehyde 3-phosphate + acetaldehyde</text>
        <dbReference type="Rhea" id="RHEA:12821"/>
        <dbReference type="ChEBI" id="CHEBI:15343"/>
        <dbReference type="ChEBI" id="CHEBI:59776"/>
        <dbReference type="ChEBI" id="CHEBI:62877"/>
        <dbReference type="EC" id="4.1.2.4"/>
    </reaction>
</comment>
<comment type="pathway">
    <text evidence="1">Carbohydrate degradation; 2-deoxy-D-ribose 1-phosphate degradation; D-glyceraldehyde 3-phosphate and acetaldehyde from 2-deoxy-alpha-D-ribose 1-phosphate: step 2/2.</text>
</comment>
<comment type="subcellular location">
    <subcellularLocation>
        <location evidence="1">Cytoplasm</location>
    </subcellularLocation>
</comment>
<comment type="similarity">
    <text evidence="1">Belongs to the DeoC/FbaB aldolase family. DeoC type 1 subfamily.</text>
</comment>
<reference key="1">
    <citation type="submission" date="2008-10" db="EMBL/GenBank/DDBJ databases">
        <title>Genome sequence of Bacillus cereus AH187.</title>
        <authorList>
            <person name="Dodson R.J."/>
            <person name="Durkin A.S."/>
            <person name="Rosovitz M.J."/>
            <person name="Rasko D.A."/>
            <person name="Kolsto A.B."/>
            <person name="Okstad O.A."/>
            <person name="Ravel J."/>
            <person name="Sutton G."/>
        </authorList>
    </citation>
    <scope>NUCLEOTIDE SEQUENCE [LARGE SCALE GENOMIC DNA]</scope>
    <source>
        <strain>AH187</strain>
    </source>
</reference>
<sequence length="223" mass="23440">MNIAKLIDHTILKANATKEDVMKVIEEAKEYKFASVCINPTWVKLAAEELAGHDVDVCTVIGFPLGASTTETKAFETKDAIAKGATEVDMVINVGALKDGDDELVEKDIYEVVQAAKGKALVKVIIETCLLTDEEKVRACELSVKAGADFVKTSTGFSTGGATAEDIALMRKTVGPNVGVKASGGVRTREDADKMVAAGASRIGASASVAIVLNDAKDATDNY</sequence>
<organism>
    <name type="scientific">Bacillus cereus (strain AH187)</name>
    <dbReference type="NCBI Taxonomy" id="405534"/>
    <lineage>
        <taxon>Bacteria</taxon>
        <taxon>Bacillati</taxon>
        <taxon>Bacillota</taxon>
        <taxon>Bacilli</taxon>
        <taxon>Bacillales</taxon>
        <taxon>Bacillaceae</taxon>
        <taxon>Bacillus</taxon>
        <taxon>Bacillus cereus group</taxon>
    </lineage>
</organism>
<evidence type="ECO:0000255" key="1">
    <source>
        <dbReference type="HAMAP-Rule" id="MF_00114"/>
    </source>
</evidence>
<feature type="chain" id="PRO_1000117542" description="Deoxyribose-phosphate aldolase">
    <location>
        <begin position="1"/>
        <end position="223"/>
    </location>
</feature>
<feature type="active site" description="Proton donor/acceptor" evidence="1">
    <location>
        <position position="89"/>
    </location>
</feature>
<feature type="active site" description="Schiff-base intermediate with acetaldehyde" evidence="1">
    <location>
        <position position="152"/>
    </location>
</feature>
<feature type="active site" description="Proton donor/acceptor" evidence="1">
    <location>
        <position position="181"/>
    </location>
</feature>
<accession>B7HMQ9</accession>